<gene>
    <name evidence="1" type="primary">menE</name>
    <name type="ordered locus">BLi03219</name>
    <name type="ordered locus">BL02405</name>
</gene>
<proteinExistence type="inferred from homology"/>
<feature type="chain" id="PRO_1000045963" description="2-succinylbenzoate--CoA ligase">
    <location>
        <begin position="1"/>
        <end position="478"/>
    </location>
</feature>
<organism>
    <name type="scientific">Bacillus licheniformis (strain ATCC 14580 / DSM 13 / JCM 2505 / CCUG 7422 / NBRC 12200 / NCIMB 9375 / NCTC 10341 / NRRL NRS-1264 / Gibson 46)</name>
    <dbReference type="NCBI Taxonomy" id="279010"/>
    <lineage>
        <taxon>Bacteria</taxon>
        <taxon>Bacillati</taxon>
        <taxon>Bacillota</taxon>
        <taxon>Bacilli</taxon>
        <taxon>Bacillales</taxon>
        <taxon>Bacillaceae</taxon>
        <taxon>Bacillus</taxon>
    </lineage>
</organism>
<evidence type="ECO:0000255" key="1">
    <source>
        <dbReference type="HAMAP-Rule" id="MF_00731"/>
    </source>
</evidence>
<name>MENE_BACLD</name>
<sequence length="478" mass="52904">MLMDHPNWLKQRAELTPDRMAVIQGDHKLTFIQLFHEAKKTAGRLKSFGLKNGDTAALLLTNRMEMVIAVHACFLLGVRIVLLNTKLSMAERSYQIEHSEAKLLLTEKPFIEEHRGGQPARAVDIEDVQNAACPPVTEIESIHLDDAATIMYTSGTTGRPKGVMQTFANHYFSAVSSALNLGLQEHDRWLIALPLFHISGLSALFKSVIYGMTVVLHQRFDAEEVLRSIKDQQVTIASVVQTMLSRLAAKVDRCPGSLRCLLLGGGPAPLSLLEECKRKRLPVVQSYGMTETCSQIATLAPEYSIEKLGSAGKPLFASSIKIEKNGTECQPGEHGEITVKGPTVMKGYLKNEAANKDSFNDGWFKTGDIGYFDDDGFLYVLDRRSDLIISGGENIYPAEVEAVLLSHPNVAEAGVKGVDDKTWGKVPHAYLVADSPVDEEELSEFCKERLASYKVPKAFHFVDRLPRNASNKLMRHKL</sequence>
<keyword id="KW-0067">ATP-binding</keyword>
<keyword id="KW-0436">Ligase</keyword>
<keyword id="KW-0474">Menaquinone biosynthesis</keyword>
<keyword id="KW-0547">Nucleotide-binding</keyword>
<keyword id="KW-1185">Reference proteome</keyword>
<dbReference type="EC" id="6.2.1.26" evidence="1"/>
<dbReference type="EMBL" id="CP000002">
    <property type="protein sequence ID" value="AAU24718.1"/>
    <property type="molecule type" value="Genomic_DNA"/>
</dbReference>
<dbReference type="EMBL" id="AE017333">
    <property type="protein sequence ID" value="AAU42079.1"/>
    <property type="molecule type" value="Genomic_DNA"/>
</dbReference>
<dbReference type="RefSeq" id="WP_009329429.1">
    <property type="nucleotide sequence ID" value="NC_006322.1"/>
</dbReference>
<dbReference type="SMR" id="Q65FT5"/>
<dbReference type="STRING" id="279010.BL02405"/>
<dbReference type="KEGG" id="bld:BLi03219"/>
<dbReference type="KEGG" id="bli:BL02405"/>
<dbReference type="PATRIC" id="fig|279010.13.peg.3292"/>
<dbReference type="eggNOG" id="COG0318">
    <property type="taxonomic scope" value="Bacteria"/>
</dbReference>
<dbReference type="HOGENOM" id="CLU_000022_59_0_9"/>
<dbReference type="UniPathway" id="UPA00079"/>
<dbReference type="UniPathway" id="UPA01057">
    <property type="reaction ID" value="UER00166"/>
</dbReference>
<dbReference type="Proteomes" id="UP000000606">
    <property type="component" value="Chromosome"/>
</dbReference>
<dbReference type="GO" id="GO:0005524">
    <property type="term" value="F:ATP binding"/>
    <property type="evidence" value="ECO:0007669"/>
    <property type="project" value="UniProtKB-KW"/>
</dbReference>
<dbReference type="GO" id="GO:0008756">
    <property type="term" value="F:o-succinylbenzoate-CoA ligase activity"/>
    <property type="evidence" value="ECO:0007669"/>
    <property type="project" value="UniProtKB-UniRule"/>
</dbReference>
<dbReference type="GO" id="GO:0009234">
    <property type="term" value="P:menaquinone biosynthetic process"/>
    <property type="evidence" value="ECO:0007669"/>
    <property type="project" value="UniProtKB-UniRule"/>
</dbReference>
<dbReference type="CDD" id="cd05912">
    <property type="entry name" value="OSB_CoA_lg"/>
    <property type="match status" value="1"/>
</dbReference>
<dbReference type="Gene3D" id="3.30.300.30">
    <property type="match status" value="1"/>
</dbReference>
<dbReference type="Gene3D" id="3.40.50.12780">
    <property type="entry name" value="N-terminal domain of ligase-like"/>
    <property type="match status" value="1"/>
</dbReference>
<dbReference type="HAMAP" id="MF_00731">
    <property type="entry name" value="MenE"/>
    <property type="match status" value="1"/>
</dbReference>
<dbReference type="InterPro" id="IPR025110">
    <property type="entry name" value="AMP-bd_C"/>
</dbReference>
<dbReference type="InterPro" id="IPR045851">
    <property type="entry name" value="AMP-bd_C_sf"/>
</dbReference>
<dbReference type="InterPro" id="IPR020845">
    <property type="entry name" value="AMP-binding_CS"/>
</dbReference>
<dbReference type="InterPro" id="IPR000873">
    <property type="entry name" value="AMP-dep_synth/lig_dom"/>
</dbReference>
<dbReference type="InterPro" id="IPR042099">
    <property type="entry name" value="ANL_N_sf"/>
</dbReference>
<dbReference type="InterPro" id="IPR050237">
    <property type="entry name" value="ATP-dep_AMP-bd_enzyme"/>
</dbReference>
<dbReference type="InterPro" id="IPR010192">
    <property type="entry name" value="MenE"/>
</dbReference>
<dbReference type="NCBIfam" id="TIGR01923">
    <property type="entry name" value="menE"/>
    <property type="match status" value="1"/>
</dbReference>
<dbReference type="NCBIfam" id="NF002966">
    <property type="entry name" value="PRK03640.1"/>
    <property type="match status" value="1"/>
</dbReference>
<dbReference type="PANTHER" id="PTHR43767">
    <property type="entry name" value="LONG-CHAIN-FATTY-ACID--COA LIGASE"/>
    <property type="match status" value="1"/>
</dbReference>
<dbReference type="PANTHER" id="PTHR43767:SF1">
    <property type="entry name" value="NONRIBOSOMAL PEPTIDE SYNTHASE PES1 (EUROFUNG)-RELATED"/>
    <property type="match status" value="1"/>
</dbReference>
<dbReference type="Pfam" id="PF00501">
    <property type="entry name" value="AMP-binding"/>
    <property type="match status" value="1"/>
</dbReference>
<dbReference type="Pfam" id="PF13193">
    <property type="entry name" value="AMP-binding_C"/>
    <property type="match status" value="1"/>
</dbReference>
<dbReference type="SUPFAM" id="SSF56801">
    <property type="entry name" value="Acetyl-CoA synthetase-like"/>
    <property type="match status" value="1"/>
</dbReference>
<dbReference type="PROSITE" id="PS00455">
    <property type="entry name" value="AMP_BINDING"/>
    <property type="match status" value="1"/>
</dbReference>
<reference key="1">
    <citation type="journal article" date="2004" name="J. Mol. Microbiol. Biotechnol.">
        <title>The complete genome sequence of Bacillus licheniformis DSM13, an organism with great industrial potential.</title>
        <authorList>
            <person name="Veith B."/>
            <person name="Herzberg C."/>
            <person name="Steckel S."/>
            <person name="Feesche J."/>
            <person name="Maurer K.H."/>
            <person name="Ehrenreich P."/>
            <person name="Baeumer S."/>
            <person name="Henne A."/>
            <person name="Liesegang H."/>
            <person name="Merkl R."/>
            <person name="Ehrenreich A."/>
            <person name="Gottschalk G."/>
        </authorList>
    </citation>
    <scope>NUCLEOTIDE SEQUENCE [LARGE SCALE GENOMIC DNA]</scope>
    <source>
        <strain>ATCC 14580 / DSM 13 / JCM 2505 / CCUG 7422 / NBRC 12200 / NCIMB 9375 / NCTC 10341 / NRRL NRS-1264 / Gibson 46</strain>
    </source>
</reference>
<reference key="2">
    <citation type="journal article" date="2004" name="Genome Biol.">
        <title>Complete genome sequence of the industrial bacterium Bacillus licheniformis and comparisons with closely related Bacillus species.</title>
        <authorList>
            <person name="Rey M.W."/>
            <person name="Ramaiya P."/>
            <person name="Nelson B.A."/>
            <person name="Brody-Karpin S.D."/>
            <person name="Zaretsky E.J."/>
            <person name="Tang M."/>
            <person name="Lopez de Leon A."/>
            <person name="Xiang H."/>
            <person name="Gusti V."/>
            <person name="Clausen I.G."/>
            <person name="Olsen P.B."/>
            <person name="Rasmussen M.D."/>
            <person name="Andersen J.T."/>
            <person name="Joergensen P.L."/>
            <person name="Larsen T.S."/>
            <person name="Sorokin A."/>
            <person name="Bolotin A."/>
            <person name="Lapidus A."/>
            <person name="Galleron N."/>
            <person name="Ehrlich S.D."/>
            <person name="Berka R.M."/>
        </authorList>
    </citation>
    <scope>NUCLEOTIDE SEQUENCE [LARGE SCALE GENOMIC DNA]</scope>
    <source>
        <strain>ATCC 14580 / DSM 13 / JCM 2505 / CCUG 7422 / NBRC 12200 / NCIMB 9375 / NCTC 10341 / NRRL NRS-1264 / Gibson 46</strain>
    </source>
</reference>
<protein>
    <recommendedName>
        <fullName evidence="1">2-succinylbenzoate--CoA ligase</fullName>
        <ecNumber evidence="1">6.2.1.26</ecNumber>
    </recommendedName>
    <alternativeName>
        <fullName evidence="1">o-succinylbenzoyl-CoA synthetase</fullName>
        <shortName evidence="1">OSB-CoA synthetase</shortName>
    </alternativeName>
</protein>
<accession>Q65FT5</accession>
<accession>Q62R92</accession>
<comment type="function">
    <text evidence="1">Converts 2-succinylbenzoate (OSB) to 2-succinylbenzoyl-CoA (OSB-CoA).</text>
</comment>
<comment type="catalytic activity">
    <reaction evidence="1">
        <text>2-succinylbenzoate + ATP + CoA = 2-succinylbenzoyl-CoA + AMP + diphosphate</text>
        <dbReference type="Rhea" id="RHEA:17009"/>
        <dbReference type="ChEBI" id="CHEBI:18325"/>
        <dbReference type="ChEBI" id="CHEBI:30616"/>
        <dbReference type="ChEBI" id="CHEBI:33019"/>
        <dbReference type="ChEBI" id="CHEBI:57287"/>
        <dbReference type="ChEBI" id="CHEBI:57364"/>
        <dbReference type="ChEBI" id="CHEBI:456215"/>
        <dbReference type="EC" id="6.2.1.26"/>
    </reaction>
</comment>
<comment type="pathway">
    <text evidence="1">Quinol/quinone metabolism; 1,4-dihydroxy-2-naphthoate biosynthesis; 1,4-dihydroxy-2-naphthoate from chorismate: step 5/7.</text>
</comment>
<comment type="pathway">
    <text evidence="1">Quinol/quinone metabolism; menaquinone biosynthesis.</text>
</comment>
<comment type="similarity">
    <text evidence="1">Belongs to the ATP-dependent AMP-binding enzyme family. MenE subfamily.</text>
</comment>